<protein>
    <recommendedName>
        <fullName>Ankyrin repeat protein B18</fullName>
    </recommendedName>
</protein>
<sequence length="574" mass="67972">MSRRLIYVLNINRESTHKIQENEIYTYFSHCNIDHTSTELDFVVKNYDLNRRQPVTGYTALHCYLYNNYFTNDVLKILLNHGVDVTMKTSSGRMPVYILLTRCCNISHDVVIDMIDKDKNHLSHRDYSNLLLEYIKSRYMLLKEEDIDENIVSTLLDKGIDPNFKQDGYTALHYYYLCLAHVYKPGECRKPITIKKAKRIISLFIQHGANLNALDNCGNTPFHLYLSIEMCNNIHMTKMLLTFNPNFKICNNHGLTPILCYITSDYIQHDILVMLIHHYETNVGEMPIDERRIIVFEFIKTYSTRPADSITYLMNRFKNIDIYTRYEGKTLLHVACEYNNTHVIDYLIRINGDINALTDNNKHATQLIIDNKENSPYTINCLLYILRYIVDKNVIRSLVDQLPSLPIFDIKSFEKFISYCILLDDTFYNRHVRNRNSKTYRYAFSKYMSFDKYDGIITKCHKETILLKLSTVLDTTLYAVLRCHNSKKLRRYLNELKKYNNDKSFKIYSNIMNERYLNVYYKDMYVSKVYDKLFPVFTDKNCLLTLLPSEIIYEILYMLTINDLYNISYPPTKV</sequence>
<dbReference type="EMBL" id="U94848">
    <property type="protein sequence ID" value="AAB96556.1"/>
    <property type="molecule type" value="Genomic_DNA"/>
</dbReference>
<dbReference type="EMBL" id="AY603355">
    <property type="protein sequence ID" value="AAT10582.1"/>
    <property type="molecule type" value="Genomic_DNA"/>
</dbReference>
<dbReference type="PIR" id="T37452">
    <property type="entry name" value="T37452"/>
</dbReference>
<dbReference type="SMR" id="O57263"/>
<dbReference type="Proteomes" id="UP000159908">
    <property type="component" value="Segment"/>
</dbReference>
<dbReference type="Proteomes" id="UP000172909">
    <property type="component" value="Segment"/>
</dbReference>
<dbReference type="Gene3D" id="1.25.40.20">
    <property type="entry name" value="Ankyrin repeat-containing domain"/>
    <property type="match status" value="3"/>
</dbReference>
<dbReference type="InterPro" id="IPR051637">
    <property type="entry name" value="Ank_repeat_dom-contain_49"/>
</dbReference>
<dbReference type="InterPro" id="IPR002110">
    <property type="entry name" value="Ankyrin_rpt"/>
</dbReference>
<dbReference type="InterPro" id="IPR036770">
    <property type="entry name" value="Ankyrin_rpt-contain_sf"/>
</dbReference>
<dbReference type="InterPro" id="IPR001810">
    <property type="entry name" value="F-box_dom"/>
</dbReference>
<dbReference type="InterPro" id="IPR018272">
    <property type="entry name" value="PRANC_domain"/>
</dbReference>
<dbReference type="PANTHER" id="PTHR24180">
    <property type="entry name" value="CYCLIN-DEPENDENT KINASE INHIBITOR 2C-RELATED"/>
    <property type="match status" value="1"/>
</dbReference>
<dbReference type="PANTHER" id="PTHR24180:SF45">
    <property type="entry name" value="POLY [ADP-RIBOSE] POLYMERASE TANKYRASE"/>
    <property type="match status" value="1"/>
</dbReference>
<dbReference type="Pfam" id="PF00023">
    <property type="entry name" value="Ank"/>
    <property type="match status" value="1"/>
</dbReference>
<dbReference type="Pfam" id="PF13606">
    <property type="entry name" value="Ank_3"/>
    <property type="match status" value="1"/>
</dbReference>
<dbReference type="Pfam" id="PF09372">
    <property type="entry name" value="PRANC"/>
    <property type="match status" value="1"/>
</dbReference>
<dbReference type="SMART" id="SM00248">
    <property type="entry name" value="ANK"/>
    <property type="match status" value="6"/>
</dbReference>
<dbReference type="SUPFAM" id="SSF48403">
    <property type="entry name" value="Ankyrin repeat"/>
    <property type="match status" value="2"/>
</dbReference>
<dbReference type="PROSITE" id="PS50297">
    <property type="entry name" value="ANK_REP_REGION"/>
    <property type="match status" value="1"/>
</dbReference>
<dbReference type="PROSITE" id="PS50088">
    <property type="entry name" value="ANK_REPEAT"/>
    <property type="match status" value="2"/>
</dbReference>
<dbReference type="PROSITE" id="PS50181">
    <property type="entry name" value="FBOX"/>
    <property type="match status" value="1"/>
</dbReference>
<organism>
    <name type="scientific">Vaccinia virus (strain Ankara)</name>
    <name type="common">VACV</name>
    <dbReference type="NCBI Taxonomy" id="126794"/>
    <lineage>
        <taxon>Viruses</taxon>
        <taxon>Varidnaviria</taxon>
        <taxon>Bamfordvirae</taxon>
        <taxon>Nucleocytoviricota</taxon>
        <taxon>Pokkesviricetes</taxon>
        <taxon>Chitovirales</taxon>
        <taxon>Poxviridae</taxon>
        <taxon>Chordopoxvirinae</taxon>
        <taxon>Orthopoxvirus</taxon>
        <taxon>Vaccinia virus</taxon>
    </lineage>
</organism>
<name>VB18_VACCA</name>
<gene>
    <name type="ordered locus">MVA186R</name>
    <name type="ordered locus">ACAM3000_MVA_186</name>
</gene>
<reference key="1">
    <citation type="journal article" date="1998" name="Virology">
        <title>The complete genomic sequence of the modified vaccinia Ankara strain: comparison with other orthopoxviruses.</title>
        <authorList>
            <person name="Antoine G."/>
            <person name="Scheiflinger F."/>
            <person name="Dorner F."/>
            <person name="Falkner F.G."/>
        </authorList>
    </citation>
    <scope>NUCLEOTIDE SEQUENCE [LARGE SCALE GENOMIC DNA]</scope>
</reference>
<reference key="2">
    <citation type="submission" date="2004-04" db="EMBL/GenBank/DDBJ databases">
        <authorList>
            <person name="Esposito J.J."/>
            <person name="Frace M."/>
            <person name="Sammons S.A."/>
            <person name="Olsen-Rasmussen M.S."/>
            <person name="Osborne J."/>
            <person name="Khristova M."/>
            <person name="Wohlhueter R.M."/>
        </authorList>
    </citation>
    <scope>NUCLEOTIDE SEQUENCE [LARGE SCALE GENOMIC DNA]</scope>
    <source>
        <strain>Isolate Acambis 3000</strain>
    </source>
</reference>
<feature type="chain" id="PRO_0000067088" description="Ankyrin repeat protein B18">
    <location>
        <begin position="1"/>
        <end position="574"/>
    </location>
</feature>
<feature type="repeat" description="ANK 1">
    <location>
        <begin position="56"/>
        <end position="87"/>
    </location>
</feature>
<feature type="repeat" description="ANK 2">
    <location>
        <begin position="135"/>
        <end position="164"/>
    </location>
</feature>
<feature type="repeat" description="ANK 3">
    <location>
        <begin position="167"/>
        <end position="213"/>
    </location>
</feature>
<feature type="repeat" description="ANK 4">
    <location>
        <begin position="217"/>
        <end position="249"/>
    </location>
</feature>
<feature type="repeat" description="ANK 5">
    <location>
        <begin position="253"/>
        <end position="285"/>
    </location>
</feature>
<feature type="repeat" description="ANK 6">
    <location>
        <begin position="327"/>
        <end position="356"/>
    </location>
</feature>
<feature type="domain" description="F-box" evidence="1">
    <location>
        <begin position="541"/>
        <end position="574"/>
    </location>
</feature>
<evidence type="ECO:0000255" key="1">
    <source>
        <dbReference type="PROSITE-ProRule" id="PRU00080"/>
    </source>
</evidence>
<proteinExistence type="predicted"/>
<keyword id="KW-0040">ANK repeat</keyword>
<keyword id="KW-0677">Repeat</keyword>
<organismHost>
    <name type="scientific">Homo sapiens</name>
    <name type="common">Human</name>
    <dbReference type="NCBI Taxonomy" id="9606"/>
</organismHost>
<accession>O57263</accession>